<sequence length="728" mass="79446">MSNEAKCPFHQAAGNGTSNRDWWPNQLDLSILHRHSSLSDPMGKDFNYAQAFEKLDLAAVKRDLHALMTTSQDWWPADFGHYGGLFIRMAWHSAGTYRTADGRGGAGEGQQRFAPLNSWPDNANLDKARRLLWPIKQKYGRAISWADLLILTGNVALESMGFKTFGFAGGRADTWEPEDVYWGSEKIWLELSGGPNSRYSGDRQLENPLAAVQMGLIYVNPEGPDGNPDPVAAARDIRDTFARMAMNDEETVALIAGGHTFGKTHGAGPASNVGAEPEAAGIEAQGLGWKSAYRTGKGADAITSGLEVTWTTTPTQWSHNFFENLFGYEWELTKSPAGAHQWVAKGADAVIPDAFDPSKKHRPTMLTTDLSLRFDPAYEKISRRFHENPEQFADAFARAWFKLTHRDMGPRARYLGPEVPAEVLLWQDPIPAVDHPLIDAADAAELKAKVLASGLTVSQLVSTAWAAASTFRGSDKRGGANGARIRLAPQKDWEANQPEQLAAVLETLEAIRTAFNGAQRGGKQVSLADLIVLAGCAGVEQAAKNAGHAVTVPFAPGRADASQEQTDVESMAVLEPVADGFRNYLKGKYRVPAEVLLVDKAQLLTLSAPEMTVLLGGLRVLGANVGQSRHGVFTAREQALTNDFFVNLLDMGTEWKPTAADADVFEGRDRATGELKWTGTRVDLVFGSHSQLRALAEVYGSADAQEKFVRDFVAVWNKVMNLDRFDLA</sequence>
<gene>
    <name evidence="1" type="primary">katG</name>
    <name type="ordered locus">BPSL2865</name>
</gene>
<feature type="initiator methionine" description="Removed" evidence="3">
    <location>
        <position position="1"/>
    </location>
</feature>
<feature type="chain" id="PRO_0000345092" description="Catalase-peroxidase">
    <location>
        <begin position="2"/>
        <end position="728"/>
    </location>
</feature>
<feature type="active site" description="Proton acceptor">
    <location>
        <position position="92"/>
    </location>
</feature>
<feature type="binding site" description="axial binding residue">
    <location>
        <position position="259"/>
    </location>
    <ligand>
        <name>heme b</name>
        <dbReference type="ChEBI" id="CHEBI:60344"/>
    </ligand>
    <ligandPart>
        <name>Fe</name>
        <dbReference type="ChEBI" id="CHEBI:18248"/>
    </ligandPart>
</feature>
<feature type="site" description="Transition state stabilizer">
    <location>
        <position position="88"/>
    </location>
</feature>
<feature type="cross-link" description="Tryptophyl-tyrosyl-methioninium (Trp-Tyr) (with M-244)">
    <location>
        <begin position="91"/>
        <end position="218"/>
    </location>
</feature>
<feature type="cross-link" description="Tryptophyl-tyrosyl-methioninium (Tyr-Met) (with W-91)">
    <location>
        <begin position="218"/>
        <end position="244"/>
    </location>
</feature>
<feature type="helix" evidence="9">
    <location>
        <begin position="19"/>
        <end position="22"/>
    </location>
</feature>
<feature type="helix" evidence="9">
    <location>
        <begin position="29"/>
        <end position="32"/>
    </location>
</feature>
<feature type="helix" evidence="9">
    <location>
        <begin position="37"/>
        <end position="39"/>
    </location>
</feature>
<feature type="helix" evidence="9">
    <location>
        <begin position="48"/>
        <end position="53"/>
    </location>
</feature>
<feature type="helix" evidence="9">
    <location>
        <begin position="57"/>
        <end position="68"/>
    </location>
</feature>
<feature type="helix" evidence="9">
    <location>
        <begin position="78"/>
        <end position="80"/>
    </location>
</feature>
<feature type="helix" evidence="9">
    <location>
        <begin position="83"/>
        <end position="94"/>
    </location>
</feature>
<feature type="turn" evidence="9">
    <location>
        <begin position="99"/>
        <end position="101"/>
    </location>
</feature>
<feature type="helix" evidence="11">
    <location>
        <begin position="106"/>
        <end position="108"/>
    </location>
</feature>
<feature type="helix" evidence="9">
    <location>
        <begin position="110"/>
        <end position="112"/>
    </location>
</feature>
<feature type="helix" evidence="9">
    <location>
        <begin position="116"/>
        <end position="118"/>
    </location>
</feature>
<feature type="helix" evidence="9">
    <location>
        <begin position="120"/>
        <end position="122"/>
    </location>
</feature>
<feature type="helix" evidence="9">
    <location>
        <begin position="125"/>
        <end position="131"/>
    </location>
</feature>
<feature type="helix" evidence="9">
    <location>
        <begin position="133"/>
        <end position="139"/>
    </location>
</feature>
<feature type="helix" evidence="9">
    <location>
        <begin position="140"/>
        <end position="142"/>
    </location>
</feature>
<feature type="helix" evidence="9">
    <location>
        <begin position="145"/>
        <end position="159"/>
    </location>
</feature>
<feature type="strand" evidence="10">
    <location>
        <begin position="192"/>
        <end position="194"/>
    </location>
</feature>
<feature type="strand" evidence="9">
    <location>
        <begin position="198"/>
        <end position="200"/>
    </location>
</feature>
<feature type="turn" evidence="9">
    <location>
        <begin position="201"/>
        <end position="203"/>
    </location>
</feature>
<feature type="strand" evidence="9">
    <location>
        <begin position="211"/>
        <end position="213"/>
    </location>
</feature>
<feature type="strand" evidence="11">
    <location>
        <begin position="217"/>
        <end position="219"/>
    </location>
</feature>
<feature type="helix" evidence="9">
    <location>
        <begin position="224"/>
        <end position="226"/>
    </location>
</feature>
<feature type="helix" evidence="9">
    <location>
        <begin position="230"/>
        <end position="242"/>
    </location>
</feature>
<feature type="turn" evidence="9">
    <location>
        <begin position="243"/>
        <end position="245"/>
    </location>
</feature>
<feature type="helix" evidence="9">
    <location>
        <begin position="248"/>
        <end position="258"/>
    </location>
</feature>
<feature type="strand" evidence="11">
    <location>
        <begin position="261"/>
        <end position="263"/>
    </location>
</feature>
<feature type="strand" evidence="9">
    <location>
        <begin position="266"/>
        <end position="268"/>
    </location>
</feature>
<feature type="helix" evidence="9">
    <location>
        <begin position="270"/>
        <end position="272"/>
    </location>
</feature>
<feature type="helix" evidence="9">
    <location>
        <begin position="277"/>
        <end position="279"/>
    </location>
</feature>
<feature type="helix" evidence="9">
    <location>
        <begin position="282"/>
        <end position="284"/>
    </location>
</feature>
<feature type="helix" evidence="9">
    <location>
        <begin position="298"/>
        <end position="300"/>
    </location>
</feature>
<feature type="strand" evidence="9">
    <location>
        <begin position="302"/>
        <end position="305"/>
    </location>
</feature>
<feature type="helix" evidence="9">
    <location>
        <begin position="320"/>
        <end position="327"/>
    </location>
</feature>
<feature type="strand" evidence="9">
    <location>
        <begin position="330"/>
        <end position="334"/>
    </location>
</feature>
<feature type="strand" evidence="9">
    <location>
        <begin position="340"/>
        <end position="344"/>
    </location>
</feature>
<feature type="helix" evidence="9">
    <location>
        <begin position="367"/>
        <end position="374"/>
    </location>
</feature>
<feature type="helix" evidence="9">
    <location>
        <begin position="376"/>
        <end position="387"/>
    </location>
</feature>
<feature type="helix" evidence="9">
    <location>
        <begin position="389"/>
        <end position="405"/>
    </location>
</feature>
<feature type="helix" evidence="9">
    <location>
        <begin position="411"/>
        <end position="413"/>
    </location>
</feature>
<feature type="helix" evidence="9">
    <location>
        <begin position="425"/>
        <end position="427"/>
    </location>
</feature>
<feature type="helix" evidence="9">
    <location>
        <begin position="440"/>
        <end position="452"/>
    </location>
</feature>
<feature type="helix" evidence="9">
    <location>
        <begin position="457"/>
        <end position="468"/>
    </location>
</feature>
<feature type="turn" evidence="9">
    <location>
        <begin position="473"/>
        <end position="476"/>
    </location>
</feature>
<feature type="helix" evidence="9">
    <location>
        <begin position="484"/>
        <end position="486"/>
    </location>
</feature>
<feature type="helix" evidence="9">
    <location>
        <begin position="490"/>
        <end position="492"/>
    </location>
</feature>
<feature type="helix" evidence="9">
    <location>
        <begin position="494"/>
        <end position="496"/>
    </location>
</feature>
<feature type="helix" evidence="9">
    <location>
        <begin position="498"/>
        <end position="517"/>
    </location>
</feature>
<feature type="helix" evidence="9">
    <location>
        <begin position="527"/>
        <end position="545"/>
    </location>
</feature>
<feature type="helix" evidence="9">
    <location>
        <begin position="568"/>
        <end position="571"/>
    </location>
</feature>
<feature type="helix" evidence="9">
    <location>
        <begin position="572"/>
        <end position="574"/>
    </location>
</feature>
<feature type="strand" evidence="9">
    <location>
        <begin position="577"/>
        <end position="579"/>
    </location>
</feature>
<feature type="helix" evidence="9">
    <location>
        <begin position="580"/>
        <end position="582"/>
    </location>
</feature>
<feature type="strand" evidence="9">
    <location>
        <begin position="584"/>
        <end position="587"/>
    </location>
</feature>
<feature type="helix" evidence="9">
    <location>
        <begin position="593"/>
        <end position="603"/>
    </location>
</feature>
<feature type="helix" evidence="9">
    <location>
        <begin position="608"/>
        <end position="621"/>
    </location>
</feature>
<feature type="helix" evidence="9">
    <location>
        <begin position="625"/>
        <end position="627"/>
    </location>
</feature>
<feature type="helix" evidence="9">
    <location>
        <begin position="643"/>
        <end position="648"/>
    </location>
</feature>
<feature type="strand" evidence="9">
    <location>
        <begin position="653"/>
        <end position="657"/>
    </location>
</feature>
<feature type="strand" evidence="9">
    <location>
        <begin position="664"/>
        <end position="669"/>
    </location>
</feature>
<feature type="turn" evidence="9">
    <location>
        <begin position="670"/>
        <end position="672"/>
    </location>
</feature>
<feature type="strand" evidence="9">
    <location>
        <begin position="675"/>
        <end position="680"/>
    </location>
</feature>
<feature type="helix" evidence="9">
    <location>
        <begin position="681"/>
        <end position="684"/>
    </location>
</feature>
<feature type="helix" evidence="9">
    <location>
        <begin position="685"/>
        <end position="687"/>
    </location>
</feature>
<feature type="helix" evidence="9">
    <location>
        <begin position="690"/>
        <end position="699"/>
    </location>
</feature>
<feature type="helix" evidence="9">
    <location>
        <begin position="705"/>
        <end position="720"/>
    </location>
</feature>
<feature type="turn" evidence="9">
    <location>
        <begin position="721"/>
        <end position="723"/>
    </location>
</feature>
<evidence type="ECO:0000255" key="1">
    <source>
        <dbReference type="HAMAP-Rule" id="MF_01961"/>
    </source>
</evidence>
<evidence type="ECO:0000269" key="2">
    <source>
    </source>
</evidence>
<evidence type="ECO:0000269" key="3">
    <source>
    </source>
</evidence>
<evidence type="ECO:0000269" key="4">
    <source>
    </source>
</evidence>
<evidence type="ECO:0000269" key="5">
    <source>
    </source>
</evidence>
<evidence type="ECO:0000269" key="6">
    <source>
    </source>
</evidence>
<evidence type="ECO:0000269" key="7">
    <source>
    </source>
</evidence>
<evidence type="ECO:0000305" key="8"/>
<evidence type="ECO:0007829" key="9">
    <source>
        <dbReference type="PDB" id="6CFQ"/>
    </source>
</evidence>
<evidence type="ECO:0007829" key="10">
    <source>
        <dbReference type="PDB" id="6MPY"/>
    </source>
</evidence>
<evidence type="ECO:0007829" key="11">
    <source>
        <dbReference type="PDB" id="6MQ1"/>
    </source>
</evidence>
<dbReference type="EC" id="1.11.1.21" evidence="1"/>
<dbReference type="EMBL" id="AY040244">
    <property type="protein sequence ID" value="AAK72466.3"/>
    <property type="status" value="ALT_INIT"/>
    <property type="molecule type" value="Genomic_DNA"/>
</dbReference>
<dbReference type="EMBL" id="BX571965">
    <property type="protein sequence ID" value="CAH36875.1"/>
    <property type="status" value="ALT_INIT"/>
    <property type="molecule type" value="Genomic_DNA"/>
</dbReference>
<dbReference type="RefSeq" id="WP_004522123.1">
    <property type="nucleotide sequence ID" value="NZ_CP009538.1"/>
</dbReference>
<dbReference type="RefSeq" id="YP_109459.1">
    <property type="nucleotide sequence ID" value="NC_006350.1"/>
</dbReference>
<dbReference type="PDB" id="5L02">
    <property type="method" value="X-ray"/>
    <property type="resolution" value="1.90 A"/>
    <property type="chains" value="A/B=1-728"/>
</dbReference>
<dbReference type="PDB" id="5L05">
    <property type="method" value="X-ray"/>
    <property type="resolution" value="1.70 A"/>
    <property type="chains" value="A/B=15-728"/>
</dbReference>
<dbReference type="PDB" id="5SW4">
    <property type="method" value="X-ray"/>
    <property type="resolution" value="1.90 A"/>
    <property type="chains" value="A/B=15-728"/>
</dbReference>
<dbReference type="PDB" id="5SW5">
    <property type="method" value="X-ray"/>
    <property type="resolution" value="2.05 A"/>
    <property type="chains" value="A/B=15-728"/>
</dbReference>
<dbReference type="PDB" id="5SW6">
    <property type="method" value="X-ray"/>
    <property type="resolution" value="1.90 A"/>
    <property type="chains" value="A/B=15-728"/>
</dbReference>
<dbReference type="PDB" id="5SX0">
    <property type="method" value="X-ray"/>
    <property type="resolution" value="2.00 A"/>
    <property type="chains" value="A/B=15-728"/>
</dbReference>
<dbReference type="PDB" id="5SX1">
    <property type="method" value="X-ray"/>
    <property type="resolution" value="1.80 A"/>
    <property type="chains" value="A/B=1-728"/>
</dbReference>
<dbReference type="PDB" id="5SX2">
    <property type="method" value="X-ray"/>
    <property type="resolution" value="2.15 A"/>
    <property type="chains" value="A/B=1-728"/>
</dbReference>
<dbReference type="PDB" id="5SX3">
    <property type="method" value="X-ray"/>
    <property type="resolution" value="2.00 A"/>
    <property type="chains" value="A/B=1-728"/>
</dbReference>
<dbReference type="PDB" id="5SX6">
    <property type="method" value="X-ray"/>
    <property type="resolution" value="1.90 A"/>
    <property type="chains" value="A/B=1-728"/>
</dbReference>
<dbReference type="PDB" id="5SX7">
    <property type="method" value="X-ray"/>
    <property type="resolution" value="1.95 A"/>
    <property type="chains" value="A/B=1-728"/>
</dbReference>
<dbReference type="PDB" id="5SXQ">
    <property type="method" value="X-ray"/>
    <property type="resolution" value="2.10 A"/>
    <property type="chains" value="A/B=1-728"/>
</dbReference>
<dbReference type="PDB" id="5SXR">
    <property type="method" value="X-ray"/>
    <property type="resolution" value="1.69 A"/>
    <property type="chains" value="A/B=1-728"/>
</dbReference>
<dbReference type="PDB" id="5SXS">
    <property type="method" value="X-ray"/>
    <property type="resolution" value="1.89 A"/>
    <property type="chains" value="A/B=1-728"/>
</dbReference>
<dbReference type="PDB" id="5SXT">
    <property type="method" value="X-ray"/>
    <property type="resolution" value="1.90 A"/>
    <property type="chains" value="A/B=1-728"/>
</dbReference>
<dbReference type="PDB" id="5SXW">
    <property type="method" value="X-ray"/>
    <property type="resolution" value="1.60 A"/>
    <property type="chains" value="A/B=1-728"/>
</dbReference>
<dbReference type="PDB" id="5SXX">
    <property type="method" value="X-ray"/>
    <property type="resolution" value="1.70 A"/>
    <property type="chains" value="A/B=1-728"/>
</dbReference>
<dbReference type="PDB" id="5SYH">
    <property type="method" value="X-ray"/>
    <property type="resolution" value="1.65 A"/>
    <property type="chains" value="A/B=15-728"/>
</dbReference>
<dbReference type="PDB" id="5SYI">
    <property type="method" value="X-ray"/>
    <property type="resolution" value="1.70 A"/>
    <property type="chains" value="A/B=15-728"/>
</dbReference>
<dbReference type="PDB" id="5SYK">
    <property type="method" value="X-ray"/>
    <property type="resolution" value="1.80 A"/>
    <property type="chains" value="A/B=1-728"/>
</dbReference>
<dbReference type="PDB" id="5SYL">
    <property type="method" value="X-ray"/>
    <property type="resolution" value="1.95 A"/>
    <property type="chains" value="A/B=1-728"/>
</dbReference>
<dbReference type="PDB" id="5SYV">
    <property type="method" value="X-ray"/>
    <property type="resolution" value="1.75 A"/>
    <property type="chains" value="A/B=1-728"/>
</dbReference>
<dbReference type="PDB" id="5SYX">
    <property type="method" value="X-ray"/>
    <property type="resolution" value="1.77 A"/>
    <property type="chains" value="A/B=1-728"/>
</dbReference>
<dbReference type="PDB" id="6CFQ">
    <property type="method" value="X-ray"/>
    <property type="resolution" value="1.72 A"/>
    <property type="chains" value="A/B=1-728"/>
</dbReference>
<dbReference type="PDB" id="6MPY">
    <property type="method" value="X-ray"/>
    <property type="resolution" value="2.00 A"/>
    <property type="chains" value="A/B=1-728"/>
</dbReference>
<dbReference type="PDB" id="6MQ0">
    <property type="method" value="X-ray"/>
    <property type="resolution" value="1.90 A"/>
    <property type="chains" value="A/B=1-728"/>
</dbReference>
<dbReference type="PDB" id="6MQ1">
    <property type="method" value="X-ray"/>
    <property type="resolution" value="2.50 A"/>
    <property type="chains" value="A/B=1-728"/>
</dbReference>
<dbReference type="PDBsum" id="5L02"/>
<dbReference type="PDBsum" id="5L05"/>
<dbReference type="PDBsum" id="5SW4"/>
<dbReference type="PDBsum" id="5SW5"/>
<dbReference type="PDBsum" id="5SW6"/>
<dbReference type="PDBsum" id="5SX0"/>
<dbReference type="PDBsum" id="5SX1"/>
<dbReference type="PDBsum" id="5SX2"/>
<dbReference type="PDBsum" id="5SX3"/>
<dbReference type="PDBsum" id="5SX6"/>
<dbReference type="PDBsum" id="5SX7"/>
<dbReference type="PDBsum" id="5SXQ"/>
<dbReference type="PDBsum" id="5SXR"/>
<dbReference type="PDBsum" id="5SXS"/>
<dbReference type="PDBsum" id="5SXT"/>
<dbReference type="PDBsum" id="5SXW"/>
<dbReference type="PDBsum" id="5SXX"/>
<dbReference type="PDBsum" id="5SYH"/>
<dbReference type="PDBsum" id="5SYI"/>
<dbReference type="PDBsum" id="5SYK"/>
<dbReference type="PDBsum" id="5SYL"/>
<dbReference type="PDBsum" id="5SYV"/>
<dbReference type="PDBsum" id="5SYX"/>
<dbReference type="PDBsum" id="6CFQ"/>
<dbReference type="PDBsum" id="6MPY"/>
<dbReference type="PDBsum" id="6MQ0"/>
<dbReference type="PDBsum" id="6MQ1"/>
<dbReference type="SMR" id="Q939D2"/>
<dbReference type="STRING" id="272560.BPSL2865"/>
<dbReference type="DrugBank" id="DB08638">
    <property type="generic name" value="1-hydroperoxy-L-tryptophan"/>
</dbReference>
<dbReference type="PeroxiBase" id="2303">
    <property type="entry name" value="BpCP01_K96243"/>
</dbReference>
<dbReference type="KEGG" id="bps:BPSL2865"/>
<dbReference type="PATRIC" id="fig|272560.51.peg.2433"/>
<dbReference type="eggNOG" id="COG0376">
    <property type="taxonomic scope" value="Bacteria"/>
</dbReference>
<dbReference type="BRENDA" id="1.11.1.21">
    <property type="organism ID" value="1031"/>
</dbReference>
<dbReference type="SABIO-RK" id="Q939D2"/>
<dbReference type="Proteomes" id="UP000000605">
    <property type="component" value="Chromosome 1"/>
</dbReference>
<dbReference type="GO" id="GO:0005829">
    <property type="term" value="C:cytosol"/>
    <property type="evidence" value="ECO:0007669"/>
    <property type="project" value="TreeGrafter"/>
</dbReference>
<dbReference type="GO" id="GO:0004096">
    <property type="term" value="F:catalase activity"/>
    <property type="evidence" value="ECO:0007669"/>
    <property type="project" value="UniProtKB-UniRule"/>
</dbReference>
<dbReference type="GO" id="GO:0020037">
    <property type="term" value="F:heme binding"/>
    <property type="evidence" value="ECO:0007669"/>
    <property type="project" value="InterPro"/>
</dbReference>
<dbReference type="GO" id="GO:0046872">
    <property type="term" value="F:metal ion binding"/>
    <property type="evidence" value="ECO:0007669"/>
    <property type="project" value="UniProtKB-KW"/>
</dbReference>
<dbReference type="GO" id="GO:0070301">
    <property type="term" value="P:cellular response to hydrogen peroxide"/>
    <property type="evidence" value="ECO:0007669"/>
    <property type="project" value="TreeGrafter"/>
</dbReference>
<dbReference type="GO" id="GO:0042744">
    <property type="term" value="P:hydrogen peroxide catabolic process"/>
    <property type="evidence" value="ECO:0007669"/>
    <property type="project" value="UniProtKB-KW"/>
</dbReference>
<dbReference type="CDD" id="cd00649">
    <property type="entry name" value="catalase_peroxidase_1"/>
    <property type="match status" value="1"/>
</dbReference>
<dbReference type="CDD" id="cd08200">
    <property type="entry name" value="catalase_peroxidase_2"/>
    <property type="match status" value="1"/>
</dbReference>
<dbReference type="FunFam" id="1.10.420.10:FF:000002">
    <property type="entry name" value="Catalase-peroxidase"/>
    <property type="match status" value="1"/>
</dbReference>
<dbReference type="FunFam" id="1.10.420.10:FF:000004">
    <property type="entry name" value="Catalase-peroxidase"/>
    <property type="match status" value="1"/>
</dbReference>
<dbReference type="FunFam" id="1.10.520.10:FF:000002">
    <property type="entry name" value="Catalase-peroxidase"/>
    <property type="match status" value="1"/>
</dbReference>
<dbReference type="FunFam" id="1.10.520.10:FF:000004">
    <property type="entry name" value="Catalase-peroxidase"/>
    <property type="match status" value="1"/>
</dbReference>
<dbReference type="Gene3D" id="1.10.520.10">
    <property type="match status" value="2"/>
</dbReference>
<dbReference type="Gene3D" id="1.10.420.10">
    <property type="entry name" value="Peroxidase, domain 2"/>
    <property type="match status" value="2"/>
</dbReference>
<dbReference type="HAMAP" id="MF_01961">
    <property type="entry name" value="Catal_peroxid"/>
    <property type="match status" value="1"/>
</dbReference>
<dbReference type="InterPro" id="IPR000763">
    <property type="entry name" value="Catalase_peroxidase"/>
</dbReference>
<dbReference type="InterPro" id="IPR002016">
    <property type="entry name" value="Haem_peroxidase"/>
</dbReference>
<dbReference type="InterPro" id="IPR010255">
    <property type="entry name" value="Haem_peroxidase_sf"/>
</dbReference>
<dbReference type="InterPro" id="IPR019794">
    <property type="entry name" value="Peroxidases_AS"/>
</dbReference>
<dbReference type="InterPro" id="IPR019793">
    <property type="entry name" value="Peroxidases_heam-ligand_BS"/>
</dbReference>
<dbReference type="NCBIfam" id="TIGR00198">
    <property type="entry name" value="cat_per_HPI"/>
    <property type="match status" value="1"/>
</dbReference>
<dbReference type="NCBIfam" id="NF011635">
    <property type="entry name" value="PRK15061.1"/>
    <property type="match status" value="1"/>
</dbReference>
<dbReference type="PANTHER" id="PTHR30555:SF0">
    <property type="entry name" value="CATALASE-PEROXIDASE"/>
    <property type="match status" value="1"/>
</dbReference>
<dbReference type="PANTHER" id="PTHR30555">
    <property type="entry name" value="HYDROPEROXIDASE I, BIFUNCTIONAL CATALASE-PEROXIDASE"/>
    <property type="match status" value="1"/>
</dbReference>
<dbReference type="Pfam" id="PF00141">
    <property type="entry name" value="peroxidase"/>
    <property type="match status" value="2"/>
</dbReference>
<dbReference type="PRINTS" id="PR00460">
    <property type="entry name" value="BPEROXIDASE"/>
</dbReference>
<dbReference type="PRINTS" id="PR00458">
    <property type="entry name" value="PEROXIDASE"/>
</dbReference>
<dbReference type="SUPFAM" id="SSF48113">
    <property type="entry name" value="Heme-dependent peroxidases"/>
    <property type="match status" value="2"/>
</dbReference>
<dbReference type="PROSITE" id="PS00435">
    <property type="entry name" value="PEROXIDASE_1"/>
    <property type="match status" value="1"/>
</dbReference>
<dbReference type="PROSITE" id="PS00436">
    <property type="entry name" value="PEROXIDASE_2"/>
    <property type="match status" value="1"/>
</dbReference>
<dbReference type="PROSITE" id="PS50873">
    <property type="entry name" value="PEROXIDASE_4"/>
    <property type="match status" value="1"/>
</dbReference>
<name>KATG_BURPS</name>
<proteinExistence type="evidence at protein level"/>
<comment type="function">
    <text evidence="1 4">Bifunctional enzyme with both catalase and broad-spectrum peroxidase activity. Also displays NADH oxidase, isoniazid hydrazine lyase and isonicotinoyl-NAD synthase activities.</text>
</comment>
<comment type="catalytic activity">
    <reaction evidence="1">
        <text>H2O2 + AH2 = A + 2 H2O</text>
        <dbReference type="Rhea" id="RHEA:30275"/>
        <dbReference type="ChEBI" id="CHEBI:13193"/>
        <dbReference type="ChEBI" id="CHEBI:15377"/>
        <dbReference type="ChEBI" id="CHEBI:16240"/>
        <dbReference type="ChEBI" id="CHEBI:17499"/>
        <dbReference type="EC" id="1.11.1.21"/>
    </reaction>
</comment>
<comment type="catalytic activity">
    <reaction evidence="1">
        <text>2 H2O2 = O2 + 2 H2O</text>
        <dbReference type="Rhea" id="RHEA:20309"/>
        <dbReference type="ChEBI" id="CHEBI:15377"/>
        <dbReference type="ChEBI" id="CHEBI:15379"/>
        <dbReference type="ChEBI" id="CHEBI:16240"/>
        <dbReference type="EC" id="1.11.1.21"/>
    </reaction>
</comment>
<comment type="cofactor">
    <cofactor>
        <name>heme b</name>
        <dbReference type="ChEBI" id="CHEBI:60344"/>
    </cofactor>
    <text>Binds 1 heme b (iron(II)-protoporphyrin IX) group per subunit.</text>
</comment>
<comment type="biophysicochemical properties">
    <kinetics>
        <KM evidence="6 7">56 mM for H(2)O(2) for the catalase reaction (at pH 5.5-6.0)</KM>
        <KM evidence="6 7">4.5 mM for H(2)O(2) for the catalase reaction (at pH 7.0)</KM>
        <KM evidence="6 7">700 uM for H(2)O(2) for the peroxidase reaction</KM>
        <KM evidence="6 7">300 uM for ABTS for the peroxidase reaction</KM>
        <KM evidence="6 7">12.5 uM for NADH for the oxidase reaction</KM>
        <Vmax evidence="6 7">11900.0 umol/min/mg enzyme for H(2)O(2) for the catalase reaction (at pH 5.5-6.0)</Vmax>
        <Vmax evidence="6 7">4300.0 umol/min/mg enzyme for H(2)O(2) for the catalase reaction (at pH 7.0)</Vmax>
        <Vmax evidence="6 7">6.0 umol/min/mg enzyme for ABTS for the peroxidase reaction</Vmax>
    </kinetics>
    <phDependence>
        <text evidence="6 7">Optimum pH is 4.5 for the peroxidase reaction, 6.0 for the catalase reaction, and 8.75 for the NADH oxidase reaction.</text>
    </phDependence>
</comment>
<comment type="subunit">
    <text evidence="2 5 6">Homodimer.</text>
</comment>
<comment type="PTM">
    <text evidence="1">Formation of the three residue Trp-Tyr-Met cross-link is important for the catalase, but not the peroxidase activity of the enzyme.</text>
</comment>
<comment type="similarity">
    <text evidence="1">Belongs to the peroxidase family. Peroxidase/catalase subfamily.</text>
</comment>
<comment type="sequence caution" evidence="8">
    <conflict type="erroneous initiation">
        <sequence resource="EMBL-CDS" id="AAK72466"/>
    </conflict>
</comment>
<comment type="sequence caution" evidence="8">
    <conflict type="erroneous initiation">
        <sequence resource="EMBL-CDS" id="CAH36875"/>
    </conflict>
</comment>
<reference key="1">
    <citation type="journal article" date="2002" name="Gene">
        <title>The Burkholderia pseudomallei oxyR gene: expression analysis and mutant characterization.</title>
        <authorList>
            <person name="Loprasert S."/>
            <person name="Sallabhan R."/>
            <person name="Whangsuk W."/>
            <person name="Mongkolsuk S."/>
        </authorList>
    </citation>
    <scope>NUCLEOTIDE SEQUENCE [GENOMIC DNA]</scope>
</reference>
<reference key="2">
    <citation type="journal article" date="2004" name="Proc. Natl. Acad. Sci. U.S.A.">
        <title>Genomic plasticity of the causative agent of melioidosis, Burkholderia pseudomallei.</title>
        <authorList>
            <person name="Holden M.T.G."/>
            <person name="Titball R.W."/>
            <person name="Peacock S.J."/>
            <person name="Cerdeno-Tarraga A.-M."/>
            <person name="Atkins T."/>
            <person name="Crossman L.C."/>
            <person name="Pitt T."/>
            <person name="Churcher C."/>
            <person name="Mungall K.L."/>
            <person name="Bentley S.D."/>
            <person name="Sebaihia M."/>
            <person name="Thomson N.R."/>
            <person name="Bason N."/>
            <person name="Beacham I.R."/>
            <person name="Brooks K."/>
            <person name="Brown K.A."/>
            <person name="Brown N.F."/>
            <person name="Challis G.L."/>
            <person name="Cherevach I."/>
            <person name="Chillingworth T."/>
            <person name="Cronin A."/>
            <person name="Crossett B."/>
            <person name="Davis P."/>
            <person name="DeShazer D."/>
            <person name="Feltwell T."/>
            <person name="Fraser A."/>
            <person name="Hance Z."/>
            <person name="Hauser H."/>
            <person name="Holroyd S."/>
            <person name="Jagels K."/>
            <person name="Keith K.E."/>
            <person name="Maddison M."/>
            <person name="Moule S."/>
            <person name="Price C."/>
            <person name="Quail M.A."/>
            <person name="Rabbinowitsch E."/>
            <person name="Rutherford K."/>
            <person name="Sanders M."/>
            <person name="Simmonds M."/>
            <person name="Songsivilai S."/>
            <person name="Stevens K."/>
            <person name="Tumapa S."/>
            <person name="Vesaratchavest M."/>
            <person name="Whitehead S."/>
            <person name="Yeats C."/>
            <person name="Barrell B.G."/>
            <person name="Oyston P.C.F."/>
            <person name="Parkhill J."/>
        </authorList>
    </citation>
    <scope>NUCLEOTIDE SEQUENCE [LARGE SCALE GENOMIC DNA]</scope>
    <source>
        <strain>K96243</strain>
    </source>
</reference>
<reference key="3">
    <citation type="journal article" date="2003" name="J. Biol. Chem.">
        <title>Characterization of the catalase-peroxidase KatG from Burkholderia pseudomallei by mass spectrometry.</title>
        <authorList>
            <person name="Donald L.J."/>
            <person name="Krokhin O.V."/>
            <person name="Duckworth H.W."/>
            <person name="Wiseman B."/>
            <person name="Deemagarn T."/>
            <person name="Singh R."/>
            <person name="Switala J."/>
            <person name="Carpena X."/>
            <person name="Fita I."/>
            <person name="Loewen P.C."/>
        </authorList>
    </citation>
    <scope>PROTEIN SEQUENCE OF 2-5</scope>
    <scope>COVALENT BOND</scope>
</reference>
<reference key="4">
    <citation type="journal article" date="2004" name="J. Biol. Chem.">
        <title>Catalase-peroxidases (KatG) exhibit NADH oxidase activity.</title>
        <authorList>
            <person name="Singh R."/>
            <person name="Wiseman B."/>
            <person name="Deemagarn T."/>
            <person name="Donald L.J."/>
            <person name="Duckworth H.W."/>
            <person name="Carpena X."/>
            <person name="Fita I."/>
            <person name="Loewen P.C."/>
        </authorList>
    </citation>
    <scope>FUNCTION</scope>
</reference>
<reference key="5">
    <citation type="journal article" date="2007" name="Biochemistry">
        <title>Redox intermediates in the catalase cycle of catalase-peroxidases from Synechocystis PCC 6803, Burkholderia pseudomallei, and Mycobacterium tuberculosis.</title>
        <authorList>
            <person name="Jakopitsch C."/>
            <person name="Vlasits J."/>
            <person name="Wiseman B."/>
            <person name="Loewen P.C."/>
            <person name="Obinger C."/>
        </authorList>
    </citation>
    <scope>CATALYTIC MECHANISM</scope>
</reference>
<reference key="6">
    <citation type="journal article" date="2008" name="Arch. Biochem. Biophys.">
        <title>Comparative study of catalase-peroxidases (KatGs).</title>
        <authorList>
            <person name="Singh R."/>
            <person name="Wiseman B."/>
            <person name="Deemagarn T."/>
            <person name="Jha V."/>
            <person name="Switala J."/>
            <person name="Loewen P.C."/>
        </authorList>
    </citation>
    <scope>BIOPHYSICOCHEMICAL PROPERTIES</scope>
</reference>
<reference key="7">
    <citation type="journal article" date="2003" name="J. Mol. Biol.">
        <title>Catalase-peroxidase KatG of Burkholderia pseudomallei at 1.7A resolution.</title>
        <authorList>
            <person name="Carpena X."/>
            <person name="Loprasert S."/>
            <person name="Mongkolsuk S."/>
            <person name="Switala J."/>
            <person name="Loewen P.C."/>
            <person name="Fita I."/>
        </authorList>
    </citation>
    <scope>X-RAY CRYSTALLOGRAPHY (1.7 ANGSTROMS) OF 15-728 IN COMPLEX WITH HEME</scope>
    <scope>SUBUNIT</scope>
</reference>
<reference key="8">
    <citation type="journal article" date="2005" name="J. Mol. Biol.">
        <title>Structural characterization of the Ser324Thr variant of the catalase-peroxidase (KatG) from Burkholderia pseudomallei.</title>
        <authorList>
            <person name="Deemagarn T."/>
            <person name="Carpena X."/>
            <person name="Singh R."/>
            <person name="Wiseman B."/>
            <person name="Fita I."/>
            <person name="Loewen P.C."/>
        </authorList>
    </citation>
    <scope>X-RAY CRYSTALLOGRAPHY (1.9 ANGSTROMS) OF MUTANT THR-304 IN COMPLEX WITH HEME</scope>
    <scope>SUBUNIT</scope>
</reference>
<reference key="9">
    <citation type="journal article" date="2005" name="EMBO Rep.">
        <title>A molecular switch and electronic circuit modulate catalase activity in catalase-peroxidases.</title>
        <authorList>
            <person name="Carpena X."/>
            <person name="Wiseman B."/>
            <person name="Deemagarn T."/>
            <person name="Singh R."/>
            <person name="Switala J."/>
            <person name="Ivancich A."/>
            <person name="Fita I."/>
            <person name="Loewen P.C."/>
        </authorList>
    </citation>
    <scope>X-RAY CRYSTALLOGRAPHY (1.9 ANGSTROMS) IN COMPLEX WITH HEME</scope>
    <scope>SUBUNIT</scope>
    <scope>BIOPHYSICOCHEMICAL PROPERTIES</scope>
</reference>
<accession>Q939D2</accession>
<accession>Q63R09</accession>
<protein>
    <recommendedName>
        <fullName evidence="1">Catalase-peroxidase</fullName>
        <shortName evidence="1">CP</shortName>
        <ecNumber evidence="1">1.11.1.21</ecNumber>
    </recommendedName>
    <alternativeName>
        <fullName evidence="1">Peroxidase/catalase</fullName>
    </alternativeName>
</protein>
<organism>
    <name type="scientific">Burkholderia pseudomallei (strain K96243)</name>
    <dbReference type="NCBI Taxonomy" id="272560"/>
    <lineage>
        <taxon>Bacteria</taxon>
        <taxon>Pseudomonadati</taxon>
        <taxon>Pseudomonadota</taxon>
        <taxon>Betaproteobacteria</taxon>
        <taxon>Burkholderiales</taxon>
        <taxon>Burkholderiaceae</taxon>
        <taxon>Burkholderia</taxon>
        <taxon>pseudomallei group</taxon>
    </lineage>
</organism>
<keyword id="KW-0002">3D-structure</keyword>
<keyword id="KW-0903">Direct protein sequencing</keyword>
<keyword id="KW-0349">Heme</keyword>
<keyword id="KW-0376">Hydrogen peroxide</keyword>
<keyword id="KW-0408">Iron</keyword>
<keyword id="KW-0479">Metal-binding</keyword>
<keyword id="KW-0560">Oxidoreductase</keyword>
<keyword id="KW-0575">Peroxidase</keyword>
<keyword id="KW-1185">Reference proteome</keyword>